<proteinExistence type="evidence at protein level"/>
<reference evidence="11" key="1">
    <citation type="journal article" date="2000" name="Science">
        <title>The genome sequence of Drosophila melanogaster.</title>
        <authorList>
            <person name="Adams M.D."/>
            <person name="Celniker S.E."/>
            <person name="Holt R.A."/>
            <person name="Evans C.A."/>
            <person name="Gocayne J.D."/>
            <person name="Amanatides P.G."/>
            <person name="Scherer S.E."/>
            <person name="Li P.W."/>
            <person name="Hoskins R.A."/>
            <person name="Galle R.F."/>
            <person name="George R.A."/>
            <person name="Lewis S.E."/>
            <person name="Richards S."/>
            <person name="Ashburner M."/>
            <person name="Henderson S.N."/>
            <person name="Sutton G.G."/>
            <person name="Wortman J.R."/>
            <person name="Yandell M.D."/>
            <person name="Zhang Q."/>
            <person name="Chen L.X."/>
            <person name="Brandon R.C."/>
            <person name="Rogers Y.-H.C."/>
            <person name="Blazej R.G."/>
            <person name="Champe M."/>
            <person name="Pfeiffer B.D."/>
            <person name="Wan K.H."/>
            <person name="Doyle C."/>
            <person name="Baxter E.G."/>
            <person name="Helt G."/>
            <person name="Nelson C.R."/>
            <person name="Miklos G.L.G."/>
            <person name="Abril J.F."/>
            <person name="Agbayani A."/>
            <person name="An H.-J."/>
            <person name="Andrews-Pfannkoch C."/>
            <person name="Baldwin D."/>
            <person name="Ballew R.M."/>
            <person name="Basu A."/>
            <person name="Baxendale J."/>
            <person name="Bayraktaroglu L."/>
            <person name="Beasley E.M."/>
            <person name="Beeson K.Y."/>
            <person name="Benos P.V."/>
            <person name="Berman B.P."/>
            <person name="Bhandari D."/>
            <person name="Bolshakov S."/>
            <person name="Borkova D."/>
            <person name="Botchan M.R."/>
            <person name="Bouck J."/>
            <person name="Brokstein P."/>
            <person name="Brottier P."/>
            <person name="Burtis K.C."/>
            <person name="Busam D.A."/>
            <person name="Butler H."/>
            <person name="Cadieu E."/>
            <person name="Center A."/>
            <person name="Chandra I."/>
            <person name="Cherry J.M."/>
            <person name="Cawley S."/>
            <person name="Dahlke C."/>
            <person name="Davenport L.B."/>
            <person name="Davies P."/>
            <person name="de Pablos B."/>
            <person name="Delcher A."/>
            <person name="Deng Z."/>
            <person name="Mays A.D."/>
            <person name="Dew I."/>
            <person name="Dietz S.M."/>
            <person name="Dodson K."/>
            <person name="Doup L.E."/>
            <person name="Downes M."/>
            <person name="Dugan-Rocha S."/>
            <person name="Dunkov B.C."/>
            <person name="Dunn P."/>
            <person name="Durbin K.J."/>
            <person name="Evangelista C.C."/>
            <person name="Ferraz C."/>
            <person name="Ferriera S."/>
            <person name="Fleischmann W."/>
            <person name="Fosler C."/>
            <person name="Gabrielian A.E."/>
            <person name="Garg N.S."/>
            <person name="Gelbart W.M."/>
            <person name="Glasser K."/>
            <person name="Glodek A."/>
            <person name="Gong F."/>
            <person name="Gorrell J.H."/>
            <person name="Gu Z."/>
            <person name="Guan P."/>
            <person name="Harris M."/>
            <person name="Harris N.L."/>
            <person name="Harvey D.A."/>
            <person name="Heiman T.J."/>
            <person name="Hernandez J.R."/>
            <person name="Houck J."/>
            <person name="Hostin D."/>
            <person name="Houston K.A."/>
            <person name="Howland T.J."/>
            <person name="Wei M.-H."/>
            <person name="Ibegwam C."/>
            <person name="Jalali M."/>
            <person name="Kalush F."/>
            <person name="Karpen G.H."/>
            <person name="Ke Z."/>
            <person name="Kennison J.A."/>
            <person name="Ketchum K.A."/>
            <person name="Kimmel B.E."/>
            <person name="Kodira C.D."/>
            <person name="Kraft C.L."/>
            <person name="Kravitz S."/>
            <person name="Kulp D."/>
            <person name="Lai Z."/>
            <person name="Lasko P."/>
            <person name="Lei Y."/>
            <person name="Levitsky A.A."/>
            <person name="Li J.H."/>
            <person name="Li Z."/>
            <person name="Liang Y."/>
            <person name="Lin X."/>
            <person name="Liu X."/>
            <person name="Mattei B."/>
            <person name="McIntosh T.C."/>
            <person name="McLeod M.P."/>
            <person name="McPherson D."/>
            <person name="Merkulov G."/>
            <person name="Milshina N.V."/>
            <person name="Mobarry C."/>
            <person name="Morris J."/>
            <person name="Moshrefi A."/>
            <person name="Mount S.M."/>
            <person name="Moy M."/>
            <person name="Murphy B."/>
            <person name="Murphy L."/>
            <person name="Muzny D.M."/>
            <person name="Nelson D.L."/>
            <person name="Nelson D.R."/>
            <person name="Nelson K.A."/>
            <person name="Nixon K."/>
            <person name="Nusskern D.R."/>
            <person name="Pacleb J.M."/>
            <person name="Palazzolo M."/>
            <person name="Pittman G.S."/>
            <person name="Pan S."/>
            <person name="Pollard J."/>
            <person name="Puri V."/>
            <person name="Reese M.G."/>
            <person name="Reinert K."/>
            <person name="Remington K."/>
            <person name="Saunders R.D.C."/>
            <person name="Scheeler F."/>
            <person name="Shen H."/>
            <person name="Shue B.C."/>
            <person name="Siden-Kiamos I."/>
            <person name="Simpson M."/>
            <person name="Skupski M.P."/>
            <person name="Smith T.J."/>
            <person name="Spier E."/>
            <person name="Spradling A.C."/>
            <person name="Stapleton M."/>
            <person name="Strong R."/>
            <person name="Sun E."/>
            <person name="Svirskas R."/>
            <person name="Tector C."/>
            <person name="Turner R."/>
            <person name="Venter E."/>
            <person name="Wang A.H."/>
            <person name="Wang X."/>
            <person name="Wang Z.-Y."/>
            <person name="Wassarman D.A."/>
            <person name="Weinstock G.M."/>
            <person name="Weissenbach J."/>
            <person name="Williams S.M."/>
            <person name="Woodage T."/>
            <person name="Worley K.C."/>
            <person name="Wu D."/>
            <person name="Yang S."/>
            <person name="Yao Q.A."/>
            <person name="Ye J."/>
            <person name="Yeh R.-F."/>
            <person name="Zaveri J.S."/>
            <person name="Zhan M."/>
            <person name="Zhang G."/>
            <person name="Zhao Q."/>
            <person name="Zheng L."/>
            <person name="Zheng X.H."/>
            <person name="Zhong F.N."/>
            <person name="Zhong W."/>
            <person name="Zhou X."/>
            <person name="Zhu S.C."/>
            <person name="Zhu X."/>
            <person name="Smith H.O."/>
            <person name="Gibbs R.A."/>
            <person name="Myers E.W."/>
            <person name="Rubin G.M."/>
            <person name="Venter J.C."/>
        </authorList>
    </citation>
    <scope>NUCLEOTIDE SEQUENCE [LARGE SCALE GENOMIC DNA]</scope>
    <source>
        <strain evidence="11">Berkeley</strain>
    </source>
</reference>
<reference evidence="11" key="2">
    <citation type="journal article" date="2002" name="Genome Biol.">
        <title>Annotation of the Drosophila melanogaster euchromatic genome: a systematic review.</title>
        <authorList>
            <person name="Misra S."/>
            <person name="Crosby M.A."/>
            <person name="Mungall C.J."/>
            <person name="Matthews B.B."/>
            <person name="Campbell K.S."/>
            <person name="Hradecky P."/>
            <person name="Huang Y."/>
            <person name="Kaminker J.S."/>
            <person name="Millburn G.H."/>
            <person name="Prochnik S.E."/>
            <person name="Smith C.D."/>
            <person name="Tupy J.L."/>
            <person name="Whitfield E.J."/>
            <person name="Bayraktaroglu L."/>
            <person name="Berman B.P."/>
            <person name="Bettencourt B.R."/>
            <person name="Celniker S.E."/>
            <person name="de Grey A.D.N.J."/>
            <person name="Drysdale R.A."/>
            <person name="Harris N.L."/>
            <person name="Richter J."/>
            <person name="Russo S."/>
            <person name="Schroeder A.J."/>
            <person name="Shu S.Q."/>
            <person name="Stapleton M."/>
            <person name="Yamada C."/>
            <person name="Ashburner M."/>
            <person name="Gelbart W.M."/>
            <person name="Rubin G.M."/>
            <person name="Lewis S.E."/>
        </authorList>
    </citation>
    <scope>GENOME REANNOTATION</scope>
    <source>
        <strain evidence="11">Berkeley</strain>
    </source>
</reference>
<reference evidence="9" key="3">
    <citation type="journal article" date="2014" name="Cell Death Differ.">
        <title>Ubr3 E3 ligase regulates apoptosis by controlling the activity of DIAP1 in Drosophila.</title>
        <authorList>
            <person name="Huang Q."/>
            <person name="Tang X."/>
            <person name="Wang G."/>
            <person name="Fan Y."/>
            <person name="Ray L."/>
            <person name="Bergmann A."/>
            <person name="Belenkaya T.Y."/>
            <person name="Ling X."/>
            <person name="Yan D."/>
            <person name="Lin Y."/>
            <person name="Ye X."/>
            <person name="Shi W."/>
            <person name="Zhou X."/>
            <person name="Lu F."/>
            <person name="Qu J."/>
            <person name="Lin X."/>
        </authorList>
    </citation>
    <scope>FUNCTION</scope>
    <scope>INTERACTION WITH DIAP1</scope>
    <scope>UBR-TYPE DOMAIN</scope>
    <scope>RING-TYPE DOMAIN</scope>
    <scope>DISRUPTION PHENOTYPE</scope>
</reference>
<reference evidence="9" key="4">
    <citation type="journal article" date="2015" name="Science">
        <title>Pri sORF peptides induce selective proteasome-mediated protein processing.</title>
        <authorList>
            <person name="Zanet J."/>
            <person name="Benrabah E."/>
            <person name="Li T."/>
            <person name="Pelissier-Monier A."/>
            <person name="Chanut-Delalande H."/>
            <person name="Ronsin B."/>
            <person name="Bellen H.J."/>
            <person name="Payre F."/>
            <person name="Plaza S."/>
        </authorList>
    </citation>
    <scope>FUNCTION</scope>
    <scope>CATALYTIC ACTIVITY</scope>
    <scope>PATHWAY</scope>
    <scope>INTERACTION WITH DIAP1; OVO; RRP1 AND TAL</scope>
    <scope>SUBCELLULAR LOCATION</scope>
</reference>
<reference evidence="9" key="5">
    <citation type="journal article" date="2016" name="Elife">
        <title>The E3 ligase Ubr3 regulates Usher syndrome and MYH9 disorder proteins in the auditory organs of Drosophila and mammals.</title>
        <authorList>
            <person name="Li T."/>
            <person name="Giagtzoglou N."/>
            <person name="Eberl D.F."/>
            <person name="Jaiswal S.N."/>
            <person name="Cai T."/>
            <person name="Godt D."/>
            <person name="Groves A.K."/>
            <person name="Bellen H.J."/>
        </authorList>
    </citation>
    <scope>FUNCTION</scope>
    <scope>INTERACTION WITH CAD99C; CK AND SANS</scope>
    <scope>SUBCELLULAR LOCATION</scope>
    <scope>DEVELOPMENTAL STAGE</scope>
    <scope>MUTAGENESIS OF PHE-949</scope>
</reference>
<reference evidence="9" key="6">
    <citation type="journal article" date="2016" name="PLoS Genet.">
        <title>Ubr3, a Novel Modulator of Hh Signaling Affects the Degradation of Costal-2 and Kif7 through Poly-ubiquitination.</title>
        <authorList>
            <person name="Li T."/>
            <person name="Fan J."/>
            <person name="Blanco-Sanchez B."/>
            <person name="Giagtzoglou N."/>
            <person name="Lin G."/>
            <person name="Yamamoto S."/>
            <person name="Jaiswal M."/>
            <person name="Chen K."/>
            <person name="Zhang J."/>
            <person name="Wei W."/>
            <person name="Lewis M.T."/>
            <person name="Groves A.K."/>
            <person name="Westerfield M."/>
            <person name="Jia J."/>
            <person name="Bellen H.J."/>
        </authorList>
    </citation>
    <scope>FUNCTION</scope>
    <scope>INTERACTION WITH COS</scope>
    <scope>SUBCELLULAR LOCATION</scope>
    <scope>DEVELOPMENTAL STAGE</scope>
    <scope>UBR-TYPE DOMAIN</scope>
    <scope>UBIQUITINATION</scope>
    <scope>MUTAGENESIS OF PHE-949</scope>
</reference>
<protein>
    <recommendedName>
        <fullName evidence="8">E3 ubiquitin-protein ligase Ubr3</fullName>
        <ecNumber evidence="5">2.3.2.27</ecNumber>
    </recommendedName>
    <alternativeName>
        <fullName evidence="9">E3 ubiquitin-protein transferase Ubr3</fullName>
    </alternativeName>
</protein>
<keyword id="KW-0025">Alternative splicing</keyword>
<keyword id="KW-0963">Cytoplasm</keyword>
<keyword id="KW-0479">Metal-binding</keyword>
<keyword id="KW-0539">Nucleus</keyword>
<keyword id="KW-1185">Reference proteome</keyword>
<keyword id="KW-0808">Transferase</keyword>
<keyword id="KW-0832">Ubl conjugation</keyword>
<keyword id="KW-0833">Ubl conjugation pathway</keyword>
<keyword id="KW-0862">Zinc</keyword>
<keyword id="KW-0863">Zinc-finger</keyword>
<comment type="function">
    <text evidence="4 5 6 7">E3 ubiquitin-protein ligase which is a component of the N-end rule pathway (PubMed:26383956, PubMed:27195754). Recognizes and binds to proteins bearing specific N-terminal residues, leading to their ubiquitination and subsequent degradation (PubMed:26383956, PubMed:27195754). Binds to the E3 ubiquitin-protein ligase Diap1 and enhances its ubiquitination and anti-apoptotic functions (PubMed:25146930). Essential during trichome development for the ubiquitination of the N-terminus of ovo isoform B (svb), converting it from a transcriptional inhibitor to an activator (PubMed:26383956). Positively regulates a hh-signaling pathway which functions in photoreceptor differentiation (PubMed:27195754). Activation of hh up-regulates transcription of Ubr3, which in turn promotes hh signaling by mediating the ubiquitination and degradation of cos (PubMed:27195754). Necessary for auditory transduction: plays a role in Johnston's organ organization by acting in the regulation of zip and ck function in scolopidial apical attachment (PubMed:27331610). Likely to function by acting in a pathway that negatively regulates the ubiquitination of zip, consequently affecting its interaction with ck (PubMed:27331610). May also negatively regulate a component of the SCF (SKP1-CUL1-F-box protein) E3 ubiquitin-protein ligase complex Cul1, which also appears to function in the negative regulation of the zip-ck interaction and scolopidial apical attachment (PubMed:27331610).</text>
</comment>
<comment type="catalytic activity">
    <reaction evidence="5">
        <text>S-ubiquitinyl-[E2 ubiquitin-conjugating enzyme]-L-cysteine + [acceptor protein]-L-lysine = [E2 ubiquitin-conjugating enzyme]-L-cysteine + N(6)-ubiquitinyl-[acceptor protein]-L-lysine.</text>
        <dbReference type="EC" id="2.3.2.27"/>
    </reaction>
</comment>
<comment type="pathway">
    <text evidence="5">Protein modification; protein ubiquitination.</text>
</comment>
<comment type="subunit">
    <text evidence="4 5 6 7">Selectively interacts (via UBR-type zinc finger) with the cleaved form of Diap1; this interaction is enhanced by tal (PubMed:25146930, PubMed:26383956). Interacts with tal and Rrp1 (PubMed:26383956). Interacts with ovo isoform B (via N-terminus) (PubMed:26383956). Interacts with Cad99C (via the cytoplasmic domain) (PubMed:27331610). Interacts with ck and Sans (PubMed:27331610). Interacts with cos (via Kinesin motor domain) (PubMed:27195754).</text>
</comment>
<comment type="subcellular location">
    <subcellularLocation>
        <location evidence="5 6">Cytoplasm</location>
    </subcellularLocation>
    <subcellularLocation>
        <location evidence="5">Nucleus</location>
    </subcellularLocation>
    <text evidence="6 7">In Johnston's organ, high expression at the apical tips of neurons and scolopale cells (PubMed:27331610). In the cytoplasm expressed in puncta (PubMed:27195754).</text>
</comment>
<comment type="alternative products">
    <event type="alternative splicing"/>
    <isoform>
        <id>Q9W3M3-1</id>
        <name evidence="10">A</name>
        <sequence type="displayed"/>
    </isoform>
    <isoform>
        <id>Q9W3M3-2</id>
        <name evidence="10">C</name>
        <sequence type="described" ref="VSP_059031"/>
    </isoform>
</comment>
<comment type="developmental stage">
    <text evidence="6 7">Ubiquitously expressed in the second and third segments of the pupal antenna (at protein level) (PubMed:27331610). In the eye imaginal disks of 3rd instar larvae, expression is highest in the morphogenetic furrow (PubMed:27195754).</text>
</comment>
<comment type="domain">
    <text evidence="4 6">The UBR-type zinc finger domain is necessary for interaction with Diap1 and anti-apoptotic activity (PubMed:25146930). Domain is also sufficient for interaction with cos (PubMed:27195754).</text>
</comment>
<comment type="domain">
    <text evidence="4">The RING-type zinc finger domain is not necessary for interaction with Diap1 and anti-apoptotic activity.</text>
</comment>
<comment type="PTM">
    <text evidence="6">In vitro, self-ubiquitination in the presence of E1, E2 and ubiquitin.</text>
</comment>
<comment type="disruption phenotype">
    <text evidence="4">RNAi-mediated knockdown in the eye results in small rough eyes.</text>
</comment>
<comment type="similarity">
    <text evidence="9">Belongs to the E3 ubiquitin-protein ligase UBR1-like family.</text>
</comment>
<accession>Q9W3M3</accession>
<accession>M9PGM3</accession>
<gene>
    <name evidence="8 10" type="primary">Ubr3</name>
    <name evidence="10" type="ORF">CG42593</name>
</gene>
<sequence>MDEDDNLSNADISIDDEEVVREQTHHPPMQEDQELDNEDGSSDVDLSSVYVVPPIVSAPSPASVRIAGGSTIGGGGVAAGAVPTTTDNSHSPFHDWDSSVAAAAAPPPPPPRTGPTTTTSSGTAAESGAASALSDDAGAKPSFFFGASSFSLRSRKEVAALINTECCRGSPTPDLDSIMDTLFNPGTPIDNLDNIEWIRWLIAGGRTPQEFVKIVRSYDNHAKCGLVWVPHVVAYRCRTCGISPCMSICRDCFKKGNHTNHDFNMFLSQAGGACDCGDTSVMKAEGFCSDHGINNRVNRDPVPNNLLAVAEAIMPKLLFRLLQHFREHSDTPLEVQAITSYSCEEFANMLIDLNNMGEIMRKVMTRTLINPEVYAFFMEAPCQDTRNGRFLKANREKYEDAVNRFPNPEPPDEYRDLPALGDKLVHTTLLEEFIFWTFKFEFPQTLVCFLLNMLPDQDYKEHLTRTFVMHYSRIPSVLEMSRDPDTLSNRVVHMSVQLFSNESLALKMVNELSLLHVMIISLKLMMSKILIQNTLHDPNKNFHFVIDCTRQVMKDHCYWPLVSDFNNVLSHESVALVFLRDDNLIDMWFQFLQMLQGMNVNVRETASHVEFEPNSYYAAFSCELEASAYPMWSIISHLQDGTHAHLAKKIINYCVTTLHEWLDSIYFMEARLSMEEMMQASFHFPLHRYLAAFVCQAVTKMGISLNDVLPSRPYLLPLLMIHPLRVQSFFYEILAGKWVRNGLQIKGQAMTYIQANFCNSMADMDLFFLQICATNLPQYFFLQNTIELFDVGQWLETAPLKQPQKAEQSSMLEGFLTFLATLVTSRTNLGNDEATQCIIEISALLATENKTHSQLLELMPERSGNVHTKNFETFLKKLSVYKAPSSGSENLEQGLFTPIDEVWEKHYDPLHVLLRAVHRRDFQSSLDRFTNYVKSKDKMPASGNLWPPFRLPHALPATSSFSDPCKILNSRIFHSTILSIFFRAVHTRDVSEHLLALAVFLLEIAVETSDDVGSGTGDRAPPALAAVVESSSGPGYHGYGTGRHEPPKLFHCYPTDNLSCNLRHVVKKVSLKSRDPQVITSSYRSNPFYSDLDFEVEADPEQSMRMIGQGDPEGDEATGGAGLGMGAHSRRNVSQALVPMRVPGMEVALPPDLSVVAETGVVIRQDSNEDDLLREGNHAMDMSPPAALDFHFPLQQITLPESGMEVAIRRDLLLAETNNMGAIAGGAGGGANASATPPAGASNEMFSPTTPTGSGMLLPFQRVQPVAVPSSGNMDIVPSNAMGAGGSFTSGVSGSGTGRRMNYETGGARKRSVDIAIGGSNKDELHLDESILSLLLKLHSQLSGTLDSFSLSDGEDQSSDDDSTMDVDCNEASTSMAAAESTALAERGRSKRNYKNIHVSSSRIGDGPFFIGNLLRKIAKQDEQCAQSIDDIRARLWPNQREKQAEAKAREAKEKEERRKKARERQQKMMQDFANKQKLFMQSAAASSSGMGYGPEDEDDEELYEEQPREKEYDCIICNCTTPSTESNPIGLVVLVESSGIVGHRRRIAERLPLPINAEDESRLAHTTRLAAEFNRRTELLSLKFGDESWYLSNNMAYDNGVHVQSCGHHVHLSCLEAYLKTLYTTQRQPVQDRGEFYCPVCRQLSNSVLPLSPQLDRPTHLVRSGNQPFERLVADLTDLIKENETIPQPTKLTEAMGHAMEVMTNIAQRKVKCSSITFRKLFIFVTSIARTNLEAEIIQRGGSLCTANATRYKPKRECIVPLLHVLSVHVRVLVEWPLWSSWASLAGLPVTATEPLPAHCLELIPSILADPIALLLKFILLAPLQLDQDYFTCMVKVMYNLLYYQIVVQLCVTLTDLECDHIVKVYGSTSVGSDNSAAESQQQESAAGTTNNRRRAGQQQQSSSQLGKAMALVLSQTNDLVHLRRDCIPSTSSSAAASAAGSSSTTSTNHGASAATASSATTIEVNLKSMELQLQALCLPFLRVAALLRQHLYRHEMPEISAPGLEFVRLVYYLELVTDSMDWDCFNASKGLCFIPGTETTLPQFWCQQLMEVRPPADTVRELVLINQHSLWQQPRLLELPREYERLFTYYHERPCLNCYKVPKESSICLLCGTIVCLKQNCCAENDCCEAVRHTLSCGGGIGIFLVVTSTYIIVIRGRRACLWGSLYLDDFDEEDRDLKRGKPLYLSKDRFNLLESQWLSHKFAHTKHTWVFHRDLL</sequence>
<dbReference type="EC" id="2.3.2.27" evidence="5"/>
<dbReference type="EMBL" id="AE014298">
    <property type="protein sequence ID" value="AAF46302.4"/>
    <property type="molecule type" value="Genomic_DNA"/>
</dbReference>
<dbReference type="EMBL" id="AE014298">
    <property type="protein sequence ID" value="AGB95163.1"/>
    <property type="molecule type" value="Genomic_DNA"/>
</dbReference>
<dbReference type="RefSeq" id="NP_001259318.1">
    <molecule id="Q9W3M3-2"/>
    <property type="nucleotide sequence ID" value="NM_001272389.1"/>
</dbReference>
<dbReference type="RefSeq" id="NP_572428.3">
    <molecule id="Q9W3M3-1"/>
    <property type="nucleotide sequence ID" value="NM_132200.4"/>
</dbReference>
<dbReference type="SMR" id="Q9W3M3"/>
<dbReference type="FunCoup" id="Q9W3M3">
    <property type="interactions" value="633"/>
</dbReference>
<dbReference type="IntAct" id="Q9W3M3">
    <property type="interactions" value="4"/>
</dbReference>
<dbReference type="STRING" id="7227.FBpp0303730"/>
<dbReference type="GlyGen" id="Q9W3M3">
    <property type="glycosylation" value="2 sites"/>
</dbReference>
<dbReference type="PaxDb" id="7227-FBpp0290962"/>
<dbReference type="EnsemblMetazoa" id="FBtr0301748">
    <molecule id="Q9W3M3-1"/>
    <property type="protein sequence ID" value="FBpp0290962"/>
    <property type="gene ID" value="FBgn0260970"/>
</dbReference>
<dbReference type="EnsemblMetazoa" id="FBtr0331299">
    <molecule id="Q9W3M3-2"/>
    <property type="protein sequence ID" value="FBpp0303731"/>
    <property type="gene ID" value="FBgn0260970"/>
</dbReference>
<dbReference type="GeneID" id="31713"/>
<dbReference type="KEGG" id="dme:Dmel_CG42593"/>
<dbReference type="UCSC" id="CG1531-RD">
    <molecule id="Q9W3M3-1"/>
    <property type="organism name" value="d. melanogaster"/>
</dbReference>
<dbReference type="AGR" id="FB:FBgn0260970"/>
<dbReference type="CTD" id="130507"/>
<dbReference type="FlyBase" id="FBgn0260970">
    <property type="gene designation" value="Ubr3"/>
</dbReference>
<dbReference type="VEuPathDB" id="VectorBase:FBgn0260970"/>
<dbReference type="eggNOG" id="KOG1139">
    <property type="taxonomic scope" value="Eukaryota"/>
</dbReference>
<dbReference type="GeneTree" id="ENSGT00950000183075"/>
<dbReference type="InParanoid" id="Q9W3M3"/>
<dbReference type="OMA" id="ICNCTTA"/>
<dbReference type="OrthoDB" id="15304at2759"/>
<dbReference type="PhylomeDB" id="Q9W3M3"/>
<dbReference type="SignaLink" id="Q9W3M3"/>
<dbReference type="UniPathway" id="UPA00143"/>
<dbReference type="BioGRID-ORCS" id="31713">
    <property type="hits" value="1 hit in 1 CRISPR screen"/>
</dbReference>
<dbReference type="GenomeRNAi" id="31713"/>
<dbReference type="PRO" id="PR:Q9W3M3"/>
<dbReference type="Proteomes" id="UP000000803">
    <property type="component" value="Chromosome X"/>
</dbReference>
<dbReference type="Bgee" id="FBgn0260970">
    <property type="expression patterns" value="Expressed in nurse follicle cell (Drosophila) in ovary and 281 other cell types or tissues"/>
</dbReference>
<dbReference type="ExpressionAtlas" id="Q9W3M3">
    <property type="expression patterns" value="baseline and differential"/>
</dbReference>
<dbReference type="GO" id="GO:0005737">
    <property type="term" value="C:cytoplasm"/>
    <property type="evidence" value="ECO:0000318"/>
    <property type="project" value="GO_Central"/>
</dbReference>
<dbReference type="GO" id="GO:0005829">
    <property type="term" value="C:cytosol"/>
    <property type="evidence" value="ECO:0000314"/>
    <property type="project" value="FlyBase"/>
</dbReference>
<dbReference type="GO" id="GO:0043025">
    <property type="term" value="C:neuronal cell body"/>
    <property type="evidence" value="ECO:0000315"/>
    <property type="project" value="FlyBase"/>
</dbReference>
<dbReference type="GO" id="GO:0005634">
    <property type="term" value="C:nucleus"/>
    <property type="evidence" value="ECO:0007669"/>
    <property type="project" value="UniProtKB-SubCell"/>
</dbReference>
<dbReference type="GO" id="GO:0000151">
    <property type="term" value="C:ubiquitin ligase complex"/>
    <property type="evidence" value="ECO:0000318"/>
    <property type="project" value="GO_Central"/>
</dbReference>
<dbReference type="GO" id="GO:0061630">
    <property type="term" value="F:ubiquitin protein ligase activity"/>
    <property type="evidence" value="ECO:0000314"/>
    <property type="project" value="FlyBase"/>
</dbReference>
<dbReference type="GO" id="GO:0008270">
    <property type="term" value="F:zinc ion binding"/>
    <property type="evidence" value="ECO:0000255"/>
    <property type="project" value="FlyBase"/>
</dbReference>
<dbReference type="GO" id="GO:0043066">
    <property type="term" value="P:negative regulation of apoptotic process"/>
    <property type="evidence" value="ECO:0000315"/>
    <property type="project" value="FlyBase"/>
</dbReference>
<dbReference type="GO" id="GO:0045880">
    <property type="term" value="P:positive regulation of smoothened signaling pathway"/>
    <property type="evidence" value="ECO:0000315"/>
    <property type="project" value="FlyBase"/>
</dbReference>
<dbReference type="GO" id="GO:0051865">
    <property type="term" value="P:protein autoubiquitination"/>
    <property type="evidence" value="ECO:0000314"/>
    <property type="project" value="FlyBase"/>
</dbReference>
<dbReference type="GO" id="GO:0070936">
    <property type="term" value="P:protein K48-linked ubiquitination"/>
    <property type="evidence" value="ECO:0000314"/>
    <property type="project" value="FlyBase"/>
</dbReference>
<dbReference type="GO" id="GO:0016567">
    <property type="term" value="P:protein ubiquitination"/>
    <property type="evidence" value="ECO:0000315"/>
    <property type="project" value="FlyBase"/>
</dbReference>
<dbReference type="GO" id="GO:0007605">
    <property type="term" value="P:sensory perception of sound"/>
    <property type="evidence" value="ECO:0000315"/>
    <property type="project" value="FlyBase"/>
</dbReference>
<dbReference type="GO" id="GO:0071596">
    <property type="term" value="P:ubiquitin-dependent protein catabolic process via the N-end rule pathway"/>
    <property type="evidence" value="ECO:0000318"/>
    <property type="project" value="GO_Central"/>
</dbReference>
<dbReference type="CDD" id="cd16483">
    <property type="entry name" value="RING-H2_UBR3"/>
    <property type="match status" value="1"/>
</dbReference>
<dbReference type="CDD" id="cd19673">
    <property type="entry name" value="UBR-box_UBR3"/>
    <property type="match status" value="1"/>
</dbReference>
<dbReference type="FunFam" id="2.10.110.30:FF:000002">
    <property type="entry name" value="Putative e3 ubiquitin-protein ligase ubr3"/>
    <property type="match status" value="1"/>
</dbReference>
<dbReference type="Gene3D" id="2.10.110.30">
    <property type="match status" value="1"/>
</dbReference>
<dbReference type="Gene3D" id="3.30.40.10">
    <property type="entry name" value="Zinc/RING finger domain, C3HC4 (zinc finger)"/>
    <property type="match status" value="1"/>
</dbReference>
<dbReference type="InterPro" id="IPR044046">
    <property type="entry name" value="E3_ligase_UBR-like_C"/>
</dbReference>
<dbReference type="InterPro" id="IPR039164">
    <property type="entry name" value="UBR1-like"/>
</dbReference>
<dbReference type="InterPro" id="IPR055194">
    <property type="entry name" value="UBR1-like_winged-helix"/>
</dbReference>
<dbReference type="InterPro" id="IPR013083">
    <property type="entry name" value="Znf_RING/FYVE/PHD"/>
</dbReference>
<dbReference type="InterPro" id="IPR003126">
    <property type="entry name" value="Znf_UBR"/>
</dbReference>
<dbReference type="PANTHER" id="PTHR21497:SF39">
    <property type="entry name" value="E3 UBIQUITIN-PROTEIN LIGASE UBR3"/>
    <property type="match status" value="1"/>
</dbReference>
<dbReference type="PANTHER" id="PTHR21497">
    <property type="entry name" value="UBIQUITIN LIGASE E3 ALPHA-RELATED"/>
    <property type="match status" value="1"/>
</dbReference>
<dbReference type="Pfam" id="PF18995">
    <property type="entry name" value="PRT6_C"/>
    <property type="match status" value="1"/>
</dbReference>
<dbReference type="Pfam" id="PF22960">
    <property type="entry name" value="UBR1-like_wing"/>
    <property type="match status" value="1"/>
</dbReference>
<dbReference type="Pfam" id="PF02207">
    <property type="entry name" value="zf-UBR"/>
    <property type="match status" value="1"/>
</dbReference>
<dbReference type="SMART" id="SM00396">
    <property type="entry name" value="ZnF_UBR1"/>
    <property type="match status" value="1"/>
</dbReference>
<dbReference type="SUPFAM" id="SSF57850">
    <property type="entry name" value="RING/U-box"/>
    <property type="match status" value="1"/>
</dbReference>
<dbReference type="PROSITE" id="PS51157">
    <property type="entry name" value="ZF_UBR"/>
    <property type="match status" value="1"/>
</dbReference>
<evidence type="ECO:0000255" key="1">
    <source>
        <dbReference type="PROSITE-ProRule" id="PRU00175"/>
    </source>
</evidence>
<evidence type="ECO:0000255" key="2">
    <source>
        <dbReference type="PROSITE-ProRule" id="PRU00508"/>
    </source>
</evidence>
<evidence type="ECO:0000256" key="3">
    <source>
        <dbReference type="SAM" id="MobiDB-lite"/>
    </source>
</evidence>
<evidence type="ECO:0000269" key="4">
    <source>
    </source>
</evidence>
<evidence type="ECO:0000269" key="5">
    <source>
    </source>
</evidence>
<evidence type="ECO:0000269" key="6">
    <source>
    </source>
</evidence>
<evidence type="ECO:0000269" key="7">
    <source>
    </source>
</evidence>
<evidence type="ECO:0000303" key="8">
    <source>
    </source>
</evidence>
<evidence type="ECO:0000305" key="9"/>
<evidence type="ECO:0000312" key="10">
    <source>
        <dbReference type="FlyBase" id="FBgn0260970"/>
    </source>
</evidence>
<evidence type="ECO:0000312" key="11">
    <source>
        <dbReference type="Proteomes" id="UP000000803"/>
    </source>
</evidence>
<name>UBR3_DROME</name>
<organism evidence="11">
    <name type="scientific">Drosophila melanogaster</name>
    <name type="common">Fruit fly</name>
    <dbReference type="NCBI Taxonomy" id="7227"/>
    <lineage>
        <taxon>Eukaryota</taxon>
        <taxon>Metazoa</taxon>
        <taxon>Ecdysozoa</taxon>
        <taxon>Arthropoda</taxon>
        <taxon>Hexapoda</taxon>
        <taxon>Insecta</taxon>
        <taxon>Pterygota</taxon>
        <taxon>Neoptera</taxon>
        <taxon>Endopterygota</taxon>
        <taxon>Diptera</taxon>
        <taxon>Brachycera</taxon>
        <taxon>Muscomorpha</taxon>
        <taxon>Ephydroidea</taxon>
        <taxon>Drosophilidae</taxon>
        <taxon>Drosophila</taxon>
        <taxon>Sophophora</taxon>
    </lineage>
</organism>
<feature type="chain" id="PRO_0000441157" description="E3 ubiquitin-protein ligase Ubr3">
    <location>
        <begin position="1"/>
        <end position="2219"/>
    </location>
</feature>
<feature type="zinc finger region" description="UBR-type" evidence="2">
    <location>
        <begin position="222"/>
        <end position="293"/>
    </location>
</feature>
<feature type="zinc finger region" description="RING-type; degenerate" evidence="1">
    <location>
        <begin position="1607"/>
        <end position="1643"/>
    </location>
</feature>
<feature type="region of interest" description="Disordered" evidence="3">
    <location>
        <begin position="1"/>
        <end position="48"/>
    </location>
</feature>
<feature type="region of interest" description="Disordered" evidence="3">
    <location>
        <begin position="78"/>
        <end position="134"/>
    </location>
</feature>
<feature type="region of interest" description="Disordered" evidence="3">
    <location>
        <begin position="1348"/>
        <end position="1367"/>
    </location>
</feature>
<feature type="region of interest" description="Disordered" evidence="3">
    <location>
        <begin position="1440"/>
        <end position="1464"/>
    </location>
</feature>
<feature type="region of interest" description="Disordered" evidence="3">
    <location>
        <begin position="1872"/>
        <end position="1902"/>
    </location>
</feature>
<feature type="region of interest" description="Disordered" evidence="3">
    <location>
        <begin position="1935"/>
        <end position="1954"/>
    </location>
</feature>
<feature type="compositionally biased region" description="Basic and acidic residues" evidence="3">
    <location>
        <begin position="20"/>
        <end position="29"/>
    </location>
</feature>
<feature type="compositionally biased region" description="Acidic residues" evidence="3">
    <location>
        <begin position="31"/>
        <end position="42"/>
    </location>
</feature>
<feature type="compositionally biased region" description="Low complexity" evidence="3">
    <location>
        <begin position="114"/>
        <end position="134"/>
    </location>
</feature>
<feature type="compositionally biased region" description="Acidic residues" evidence="3">
    <location>
        <begin position="1353"/>
        <end position="1367"/>
    </location>
</feature>
<feature type="compositionally biased region" description="Low complexity" evidence="3">
    <location>
        <begin position="1877"/>
        <end position="1888"/>
    </location>
</feature>
<feature type="splice variant" id="VSP_059031" description="In isoform C.">
    <location>
        <position position="1689"/>
    </location>
</feature>
<feature type="mutagenesis site" description="In eye imaginal disks, hh signaling is impaired resulting in delayed differentiation of photoreceptors in the morphogenetic furrow. In Johnston's organs, results in reduced auditory transduction. Often the filamentous structure of NompA at the apical junction of the neuronal cilium and antennal cuticle collapses into puncta resulting in the detachment of scolopidia from the hinge of the second and third antennal segment." evidence="6 7">
    <original>F</original>
    <variation>L</variation>
    <location>
        <position position="949"/>
    </location>
</feature>